<feature type="chain" id="PRO_0000365818" description="Lysosomal cobalamin transport escort protein LMBD1">
    <location>
        <begin position="1"/>
        <end position="541"/>
    </location>
</feature>
<feature type="topological domain" description="Extracellular" evidence="3">
    <location>
        <begin position="1"/>
        <end position="11"/>
    </location>
</feature>
<feature type="transmembrane region" description="Helical; Name=1" evidence="3">
    <location>
        <begin position="12"/>
        <end position="31"/>
    </location>
</feature>
<feature type="topological domain" description="Cytoplasmic" evidence="3">
    <location>
        <begin position="32"/>
        <end position="50"/>
    </location>
</feature>
<feature type="transmembrane region" description="Helical; Name=2" evidence="3">
    <location>
        <begin position="51"/>
        <end position="71"/>
    </location>
</feature>
<feature type="topological domain" description="Extracellular" evidence="3">
    <location>
        <begin position="72"/>
        <end position="101"/>
    </location>
</feature>
<feature type="transmembrane region" description="Helical; Name=3" evidence="3">
    <location>
        <begin position="102"/>
        <end position="122"/>
    </location>
</feature>
<feature type="topological domain" description="Cytoplasmic" evidence="3">
    <location>
        <begin position="123"/>
        <end position="145"/>
    </location>
</feature>
<feature type="transmembrane region" description="Helical; Name=4" evidence="3">
    <location>
        <begin position="146"/>
        <end position="166"/>
    </location>
</feature>
<feature type="topological domain" description="Extracellular" evidence="3">
    <location>
        <begin position="167"/>
        <end position="189"/>
    </location>
</feature>
<feature type="transmembrane region" description="Helical; Name=5" evidence="3">
    <location>
        <begin position="190"/>
        <end position="210"/>
    </location>
</feature>
<feature type="topological domain" description="Cytoplasmic" evidence="3">
    <location>
        <begin position="211"/>
        <end position="306"/>
    </location>
</feature>
<feature type="transmembrane region" description="Helical; Name=6" evidence="3">
    <location>
        <begin position="307"/>
        <end position="327"/>
    </location>
</feature>
<feature type="topological domain" description="Extracellular" evidence="3">
    <location>
        <begin position="328"/>
        <end position="365"/>
    </location>
</feature>
<feature type="transmembrane region" description="Helical; Name=7" evidence="3">
    <location>
        <begin position="366"/>
        <end position="386"/>
    </location>
</feature>
<feature type="topological domain" description="Cytoplasmic" evidence="3">
    <location>
        <begin position="387"/>
        <end position="409"/>
    </location>
</feature>
<feature type="transmembrane region" description="Helical; Name=8" evidence="3">
    <location>
        <begin position="410"/>
        <end position="430"/>
    </location>
</feature>
<feature type="topological domain" description="Extracellular" evidence="3">
    <location>
        <begin position="431"/>
        <end position="488"/>
    </location>
</feature>
<feature type="transmembrane region" description="Helical; Name=9" evidence="3">
    <location>
        <begin position="489"/>
        <end position="509"/>
    </location>
</feature>
<feature type="topological domain" description="Cytoplasmic" evidence="3">
    <location>
        <begin position="510"/>
        <end position="541"/>
    </location>
</feature>
<feature type="glycosylation site" description="N-linked (GlcNAc...) asparagine" evidence="3">
    <location>
        <position position="78"/>
    </location>
</feature>
<feature type="glycosylation site" description="N-linked (GlcNAc...) asparagine" evidence="3">
    <location>
        <position position="88"/>
    </location>
</feature>
<feature type="glycosylation site" description="N-linked (GlcNAc...) asparagine" evidence="3">
    <location>
        <position position="171"/>
    </location>
</feature>
<feature type="glycosylation site" description="N-linked (GlcNAc...) asparagine" evidence="3">
    <location>
        <position position="348"/>
    </location>
</feature>
<feature type="glycosylation site" description="N-linked (GlcNAc...) asparagine" evidence="3">
    <location>
        <position position="459"/>
    </location>
</feature>
<dbReference type="EMBL" id="BC086815">
    <property type="protein sequence ID" value="AAH86815.1"/>
    <property type="molecule type" value="mRNA"/>
</dbReference>
<dbReference type="RefSeq" id="NP_001008612.1">
    <property type="nucleotide sequence ID" value="NM_001008612.1"/>
</dbReference>
<dbReference type="SMR" id="Q5PR61"/>
<dbReference type="FunCoup" id="Q5PR61">
    <property type="interactions" value="822"/>
</dbReference>
<dbReference type="STRING" id="7955.ENSDARP00000140434"/>
<dbReference type="GlyCosmos" id="Q5PR61">
    <property type="glycosylation" value="5 sites, No reported glycans"/>
</dbReference>
<dbReference type="PaxDb" id="7955-ENSDARP00000068620"/>
<dbReference type="GeneID" id="323720"/>
<dbReference type="KEGG" id="dre:323720"/>
<dbReference type="AGR" id="ZFIN:ZDB-GENE-041212-36"/>
<dbReference type="CTD" id="55788"/>
<dbReference type="ZFIN" id="ZDB-GENE-041212-36">
    <property type="gene designation" value="lmbrd1"/>
</dbReference>
<dbReference type="eggNOG" id="ENOG502QQ2T">
    <property type="taxonomic scope" value="Eukaryota"/>
</dbReference>
<dbReference type="InParanoid" id="Q5PR61"/>
<dbReference type="OrthoDB" id="73273at2759"/>
<dbReference type="PhylomeDB" id="Q5PR61"/>
<dbReference type="PRO" id="PR:Q5PR61"/>
<dbReference type="Proteomes" id="UP000000437">
    <property type="component" value="Chromosome 13"/>
</dbReference>
<dbReference type="GO" id="GO:0045334">
    <property type="term" value="C:clathrin-coated endocytic vesicle"/>
    <property type="evidence" value="ECO:0000250"/>
    <property type="project" value="UniProtKB"/>
</dbReference>
<dbReference type="GO" id="GO:0005789">
    <property type="term" value="C:endoplasmic reticulum membrane"/>
    <property type="evidence" value="ECO:0000250"/>
    <property type="project" value="UniProtKB"/>
</dbReference>
<dbReference type="GO" id="GO:0005765">
    <property type="term" value="C:lysosomal membrane"/>
    <property type="evidence" value="ECO:0000250"/>
    <property type="project" value="UniProtKB"/>
</dbReference>
<dbReference type="GO" id="GO:0005886">
    <property type="term" value="C:plasma membrane"/>
    <property type="evidence" value="ECO:0000250"/>
    <property type="project" value="UniProtKB"/>
</dbReference>
<dbReference type="GO" id="GO:0031419">
    <property type="term" value="F:cobalamin binding"/>
    <property type="evidence" value="ECO:0007669"/>
    <property type="project" value="UniProtKB-KW"/>
</dbReference>
<dbReference type="GO" id="GO:0038016">
    <property type="term" value="P:insulin receptor internalization"/>
    <property type="evidence" value="ECO:0000250"/>
    <property type="project" value="UniProtKB"/>
</dbReference>
<dbReference type="GO" id="GO:0061462">
    <property type="term" value="P:protein localization to lysosome"/>
    <property type="evidence" value="ECO:0000250"/>
    <property type="project" value="UniProtKB"/>
</dbReference>
<dbReference type="InterPro" id="IPR050854">
    <property type="entry name" value="LMBD1_LysCbl_Transport"/>
</dbReference>
<dbReference type="InterPro" id="IPR006876">
    <property type="entry name" value="LMBR1-like_membr_prot"/>
</dbReference>
<dbReference type="PANTHER" id="PTHR16130:SF2">
    <property type="entry name" value="LYSOSOMAL COBALAMIN TRANSPORT ESCORT PROTEIN LMBD1"/>
    <property type="match status" value="1"/>
</dbReference>
<dbReference type="PANTHER" id="PTHR16130">
    <property type="entry name" value="LYSOSOMAL COBALAMIN TRANSPORTER-RELATED"/>
    <property type="match status" value="1"/>
</dbReference>
<dbReference type="Pfam" id="PF04791">
    <property type="entry name" value="LMBR1"/>
    <property type="match status" value="1"/>
</dbReference>
<gene>
    <name type="primary">lmbrd1</name>
    <name type="ORF">wu:fc08a03</name>
    <name type="ORF">zgc:103471</name>
</gene>
<organism>
    <name type="scientific">Danio rerio</name>
    <name type="common">Zebrafish</name>
    <name type="synonym">Brachydanio rerio</name>
    <dbReference type="NCBI Taxonomy" id="7955"/>
    <lineage>
        <taxon>Eukaryota</taxon>
        <taxon>Metazoa</taxon>
        <taxon>Chordata</taxon>
        <taxon>Craniata</taxon>
        <taxon>Vertebrata</taxon>
        <taxon>Euteleostomi</taxon>
        <taxon>Actinopterygii</taxon>
        <taxon>Neopterygii</taxon>
        <taxon>Teleostei</taxon>
        <taxon>Ostariophysi</taxon>
        <taxon>Cypriniformes</taxon>
        <taxon>Danionidae</taxon>
        <taxon>Danioninae</taxon>
        <taxon>Danio</taxon>
    </lineage>
</organism>
<reference key="1">
    <citation type="submission" date="2004-12" db="EMBL/GenBank/DDBJ databases">
        <authorList>
            <consortium name="NIH - Zebrafish Gene Collection (ZGC) project"/>
        </authorList>
    </citation>
    <scope>NUCLEOTIDE SEQUENCE [LARGE SCALE MRNA]</scope>
    <source>
        <tissue>Ovary</tissue>
    </source>
</reference>
<name>LMBD1_DANRE</name>
<sequence>MATPVALLSESVLGWSIFTVVLLVILAFCWVYIRKYQSRQESEVISTITAICALAIALITSALLPVDIFLVSFMKHPNGTYKEWAANNETRVQIEDTVLYGYYTLYSIILFCVFLWIPFVYFYYEEKDEDNNNKCLQVKNALKYTIGFVIVCSALLLIGTFVPLASPPNQNSTQWQKVQYLFEELGSSHGLAALSFSISSLTLIGMLAVITYTAYGMSVLPLNLIKGTRSVLYERLENTEDTEEVERQIDKLKAKCADGRPLSMRDRRNLQDLEDKLQLLHRRGRHLEIAERNCCNKVGSALRPMKILLGVFFILVALLFFVTLFISNLDKALHSAGISTGFIIFGTNLTNPLNELLLALQPVFPLDYVLITVITMYFVFTSMAGIRNMGIWFFWIRLYKIRPQRTRPQALLFLCMILLLIVLHTSYMIYSLAPQYVMYGSQKYLLQTPLPTAVPSQSNRSATITKICDADAPEDQCTVTRSYLFLHKFWFFSTIYYFGNWAFLGVFLIGLVVSCCKGKKSVIEGEVDADDSDFSDDEYVH</sequence>
<comment type="function">
    <text evidence="1 2">Lysosomal membrane chaperone required to export cobalamin (vitamin B12) from the lysosome to the cytosol, allowing its conversion to cofactors. Targets ABCD4 transporter from the endoplasmic reticulum to the lysosome. Then forms a complex with lysosomal ABCD4 and cytoplasmic MMACHC to transport cobalamin across the lysosomal membrane (By similarity). May play a role in mediating and regulating the internalization of the insulin receptor (By similarity).</text>
</comment>
<comment type="subcellular location">
    <subcellularLocation>
        <location evidence="2">Endoplasmic reticulum membrane</location>
    </subcellularLocation>
    <subcellularLocation>
        <location evidence="2">Lysosome membrane</location>
        <topology evidence="3">Multi-pass membrane protein</topology>
    </subcellularLocation>
    <subcellularLocation>
        <location evidence="1">Cell membrane</location>
        <topology evidence="3">Multi-pass membrane protein</topology>
    </subcellularLocation>
</comment>
<comment type="similarity">
    <text evidence="4">Belongs to the LIMR family. LMBRD1 subfamily.</text>
</comment>
<keyword id="KW-1003">Cell membrane</keyword>
<keyword id="KW-0846">Cobalamin</keyword>
<keyword id="KW-0170">Cobalt</keyword>
<keyword id="KW-0256">Endoplasmic reticulum</keyword>
<keyword id="KW-0325">Glycoprotein</keyword>
<keyword id="KW-0458">Lysosome</keyword>
<keyword id="KW-0472">Membrane</keyword>
<keyword id="KW-1185">Reference proteome</keyword>
<keyword id="KW-0812">Transmembrane</keyword>
<keyword id="KW-1133">Transmembrane helix</keyword>
<keyword id="KW-0813">Transport</keyword>
<proteinExistence type="evidence at transcript level"/>
<evidence type="ECO:0000250" key="1">
    <source>
        <dbReference type="UniProtKB" id="Q8K0B2"/>
    </source>
</evidence>
<evidence type="ECO:0000250" key="2">
    <source>
        <dbReference type="UniProtKB" id="Q9NUN5"/>
    </source>
</evidence>
<evidence type="ECO:0000255" key="3"/>
<evidence type="ECO:0000305" key="4"/>
<accession>Q5PR61</accession>
<protein>
    <recommendedName>
        <fullName evidence="2">Lysosomal cobalamin transport escort protein LMBD1</fullName>
        <shortName>LMBD1</shortName>
    </recommendedName>
    <alternativeName>
        <fullName>LMBR1 domain-containing protein 1</fullName>
    </alternativeName>
</protein>